<reference key="1">
    <citation type="journal article" date="2000" name="Science">
        <title>The genome sequence of Drosophila melanogaster.</title>
        <authorList>
            <person name="Adams M.D."/>
            <person name="Celniker S.E."/>
            <person name="Holt R.A."/>
            <person name="Evans C.A."/>
            <person name="Gocayne J.D."/>
            <person name="Amanatides P.G."/>
            <person name="Scherer S.E."/>
            <person name="Li P.W."/>
            <person name="Hoskins R.A."/>
            <person name="Galle R.F."/>
            <person name="George R.A."/>
            <person name="Lewis S.E."/>
            <person name="Richards S."/>
            <person name="Ashburner M."/>
            <person name="Henderson S.N."/>
            <person name="Sutton G.G."/>
            <person name="Wortman J.R."/>
            <person name="Yandell M.D."/>
            <person name="Zhang Q."/>
            <person name="Chen L.X."/>
            <person name="Brandon R.C."/>
            <person name="Rogers Y.-H.C."/>
            <person name="Blazej R.G."/>
            <person name="Champe M."/>
            <person name="Pfeiffer B.D."/>
            <person name="Wan K.H."/>
            <person name="Doyle C."/>
            <person name="Baxter E.G."/>
            <person name="Helt G."/>
            <person name="Nelson C.R."/>
            <person name="Miklos G.L.G."/>
            <person name="Abril J.F."/>
            <person name="Agbayani A."/>
            <person name="An H.-J."/>
            <person name="Andrews-Pfannkoch C."/>
            <person name="Baldwin D."/>
            <person name="Ballew R.M."/>
            <person name="Basu A."/>
            <person name="Baxendale J."/>
            <person name="Bayraktaroglu L."/>
            <person name="Beasley E.M."/>
            <person name="Beeson K.Y."/>
            <person name="Benos P.V."/>
            <person name="Berman B.P."/>
            <person name="Bhandari D."/>
            <person name="Bolshakov S."/>
            <person name="Borkova D."/>
            <person name="Botchan M.R."/>
            <person name="Bouck J."/>
            <person name="Brokstein P."/>
            <person name="Brottier P."/>
            <person name="Burtis K.C."/>
            <person name="Busam D.A."/>
            <person name="Butler H."/>
            <person name="Cadieu E."/>
            <person name="Center A."/>
            <person name="Chandra I."/>
            <person name="Cherry J.M."/>
            <person name="Cawley S."/>
            <person name="Dahlke C."/>
            <person name="Davenport L.B."/>
            <person name="Davies P."/>
            <person name="de Pablos B."/>
            <person name="Delcher A."/>
            <person name="Deng Z."/>
            <person name="Mays A.D."/>
            <person name="Dew I."/>
            <person name="Dietz S.M."/>
            <person name="Dodson K."/>
            <person name="Doup L.E."/>
            <person name="Downes M."/>
            <person name="Dugan-Rocha S."/>
            <person name="Dunkov B.C."/>
            <person name="Dunn P."/>
            <person name="Durbin K.J."/>
            <person name="Evangelista C.C."/>
            <person name="Ferraz C."/>
            <person name="Ferriera S."/>
            <person name="Fleischmann W."/>
            <person name="Fosler C."/>
            <person name="Gabrielian A.E."/>
            <person name="Garg N.S."/>
            <person name="Gelbart W.M."/>
            <person name="Glasser K."/>
            <person name="Glodek A."/>
            <person name="Gong F."/>
            <person name="Gorrell J.H."/>
            <person name="Gu Z."/>
            <person name="Guan P."/>
            <person name="Harris M."/>
            <person name="Harris N.L."/>
            <person name="Harvey D.A."/>
            <person name="Heiman T.J."/>
            <person name="Hernandez J.R."/>
            <person name="Houck J."/>
            <person name="Hostin D."/>
            <person name="Houston K.A."/>
            <person name="Howland T.J."/>
            <person name="Wei M.-H."/>
            <person name="Ibegwam C."/>
            <person name="Jalali M."/>
            <person name="Kalush F."/>
            <person name="Karpen G.H."/>
            <person name="Ke Z."/>
            <person name="Kennison J.A."/>
            <person name="Ketchum K.A."/>
            <person name="Kimmel B.E."/>
            <person name="Kodira C.D."/>
            <person name="Kraft C.L."/>
            <person name="Kravitz S."/>
            <person name="Kulp D."/>
            <person name="Lai Z."/>
            <person name="Lasko P."/>
            <person name="Lei Y."/>
            <person name="Levitsky A.A."/>
            <person name="Li J.H."/>
            <person name="Li Z."/>
            <person name="Liang Y."/>
            <person name="Lin X."/>
            <person name="Liu X."/>
            <person name="Mattei B."/>
            <person name="McIntosh T.C."/>
            <person name="McLeod M.P."/>
            <person name="McPherson D."/>
            <person name="Merkulov G."/>
            <person name="Milshina N.V."/>
            <person name="Mobarry C."/>
            <person name="Morris J."/>
            <person name="Moshrefi A."/>
            <person name="Mount S.M."/>
            <person name="Moy M."/>
            <person name="Murphy B."/>
            <person name="Murphy L."/>
            <person name="Muzny D.M."/>
            <person name="Nelson D.L."/>
            <person name="Nelson D.R."/>
            <person name="Nelson K.A."/>
            <person name="Nixon K."/>
            <person name="Nusskern D.R."/>
            <person name="Pacleb J.M."/>
            <person name="Palazzolo M."/>
            <person name="Pittman G.S."/>
            <person name="Pan S."/>
            <person name="Pollard J."/>
            <person name="Puri V."/>
            <person name="Reese M.G."/>
            <person name="Reinert K."/>
            <person name="Remington K."/>
            <person name="Saunders R.D.C."/>
            <person name="Scheeler F."/>
            <person name="Shen H."/>
            <person name="Shue B.C."/>
            <person name="Siden-Kiamos I."/>
            <person name="Simpson M."/>
            <person name="Skupski M.P."/>
            <person name="Smith T.J."/>
            <person name="Spier E."/>
            <person name="Spradling A.C."/>
            <person name="Stapleton M."/>
            <person name="Strong R."/>
            <person name="Sun E."/>
            <person name="Svirskas R."/>
            <person name="Tector C."/>
            <person name="Turner R."/>
            <person name="Venter E."/>
            <person name="Wang A.H."/>
            <person name="Wang X."/>
            <person name="Wang Z.-Y."/>
            <person name="Wassarman D.A."/>
            <person name="Weinstock G.M."/>
            <person name="Weissenbach J."/>
            <person name="Williams S.M."/>
            <person name="Woodage T."/>
            <person name="Worley K.C."/>
            <person name="Wu D."/>
            <person name="Yang S."/>
            <person name="Yao Q.A."/>
            <person name="Ye J."/>
            <person name="Yeh R.-F."/>
            <person name="Zaveri J.S."/>
            <person name="Zhan M."/>
            <person name="Zhang G."/>
            <person name="Zhao Q."/>
            <person name="Zheng L."/>
            <person name="Zheng X.H."/>
            <person name="Zhong F.N."/>
            <person name="Zhong W."/>
            <person name="Zhou X."/>
            <person name="Zhu S.C."/>
            <person name="Zhu X."/>
            <person name="Smith H.O."/>
            <person name="Gibbs R.A."/>
            <person name="Myers E.W."/>
            <person name="Rubin G.M."/>
            <person name="Venter J.C."/>
        </authorList>
    </citation>
    <scope>NUCLEOTIDE SEQUENCE [LARGE SCALE GENOMIC DNA]</scope>
    <source>
        <strain>Berkeley</strain>
    </source>
</reference>
<reference key="2">
    <citation type="journal article" date="2002" name="Genome Biol.">
        <title>Annotation of the Drosophila melanogaster euchromatic genome: a systematic review.</title>
        <authorList>
            <person name="Misra S."/>
            <person name="Crosby M.A."/>
            <person name="Mungall C.J."/>
            <person name="Matthews B.B."/>
            <person name="Campbell K.S."/>
            <person name="Hradecky P."/>
            <person name="Huang Y."/>
            <person name="Kaminker J.S."/>
            <person name="Millburn G.H."/>
            <person name="Prochnik S.E."/>
            <person name="Smith C.D."/>
            <person name="Tupy J.L."/>
            <person name="Whitfield E.J."/>
            <person name="Bayraktaroglu L."/>
            <person name="Berman B.P."/>
            <person name="Bettencourt B.R."/>
            <person name="Celniker S.E."/>
            <person name="de Grey A.D.N.J."/>
            <person name="Drysdale R.A."/>
            <person name="Harris N.L."/>
            <person name="Richter J."/>
            <person name="Russo S."/>
            <person name="Schroeder A.J."/>
            <person name="Shu S.Q."/>
            <person name="Stapleton M."/>
            <person name="Yamada C."/>
            <person name="Ashburner M."/>
            <person name="Gelbart W.M."/>
            <person name="Rubin G.M."/>
            <person name="Lewis S.E."/>
        </authorList>
    </citation>
    <scope>GENOME REANNOTATION</scope>
    <source>
        <strain>Berkeley</strain>
    </source>
</reference>
<reference key="3">
    <citation type="journal article" date="2000" name="Science">
        <title>A Drosophila complementary DNA resource.</title>
        <authorList>
            <person name="Rubin G.M."/>
            <person name="Hong L."/>
            <person name="Brokstein P."/>
            <person name="Evans-Holm M."/>
            <person name="Frise E."/>
            <person name="Stapleton M."/>
            <person name="Harvey D.A."/>
        </authorList>
    </citation>
    <scope>NUCLEOTIDE SEQUENCE [LARGE SCALE MRNA]</scope>
    <source>
        <strain>Berkeley</strain>
        <tissue>Head</tissue>
    </source>
</reference>
<reference key="4">
    <citation type="journal article" date="2007" name="Mol. Biosyst.">
        <title>An integrated chemical, mass spectrometric and computational strategy for (quantitative) phosphoproteomics: application to Drosophila melanogaster Kc167 cells.</title>
        <authorList>
            <person name="Bodenmiller B."/>
            <person name="Mueller L.N."/>
            <person name="Pedrioli P.G.A."/>
            <person name="Pflieger D."/>
            <person name="Juenger M.A."/>
            <person name="Eng J.K."/>
            <person name="Aebersold R."/>
            <person name="Tao W.A."/>
        </authorList>
    </citation>
    <scope>PHOSPHORYLATION [LARGE SCALE ANALYSIS] AT SER-346</scope>
    <scope>IDENTIFICATION BY MASS SPECTROMETRY</scope>
</reference>
<reference key="5">
    <citation type="journal article" date="2008" name="J. Proteome Res.">
        <title>Phosphoproteome analysis of Drosophila melanogaster embryos.</title>
        <authorList>
            <person name="Zhai B."/>
            <person name="Villen J."/>
            <person name="Beausoleil S.A."/>
            <person name="Mintseris J."/>
            <person name="Gygi S.P."/>
        </authorList>
    </citation>
    <scope>PHOSPHORYLATION [LARGE SCALE ANALYSIS] AT SER-346</scope>
    <scope>IDENTIFICATION BY MASS SPECTROMETRY</scope>
    <source>
        <tissue>Embryo</tissue>
    </source>
</reference>
<name>DYM_DROME</name>
<dbReference type="EMBL" id="AE013599">
    <property type="protein sequence ID" value="AAF59014.1"/>
    <property type="molecule type" value="Genomic_DNA"/>
</dbReference>
<dbReference type="EMBL" id="AF132149">
    <property type="protein sequence ID" value="AAD34737.1"/>
    <property type="molecule type" value="mRNA"/>
</dbReference>
<dbReference type="RefSeq" id="NP_610431.1">
    <property type="nucleotide sequence ID" value="NM_136587.3"/>
</dbReference>
<dbReference type="BioGRID" id="61735">
    <property type="interactions" value="10"/>
</dbReference>
<dbReference type="FunCoup" id="Q7KNA0">
    <property type="interactions" value="2013"/>
</dbReference>
<dbReference type="IntAct" id="Q7KNA0">
    <property type="interactions" value="20"/>
</dbReference>
<dbReference type="STRING" id="7227.FBpp0087755"/>
<dbReference type="iPTMnet" id="Q7KNA0"/>
<dbReference type="PaxDb" id="7227-FBpp0087755"/>
<dbReference type="DNASU" id="35897"/>
<dbReference type="EnsemblMetazoa" id="FBtr0088674">
    <property type="protein sequence ID" value="FBpp0087755"/>
    <property type="gene ID" value="FBgn0027607"/>
</dbReference>
<dbReference type="GeneID" id="35897"/>
<dbReference type="KEGG" id="dme:Dmel_CG8230"/>
<dbReference type="UCSC" id="CG8230-RA">
    <property type="organism name" value="d. melanogaster"/>
</dbReference>
<dbReference type="AGR" id="FB:FBgn0027607"/>
<dbReference type="FlyBase" id="FBgn0027607">
    <property type="gene designation" value="CG8230"/>
</dbReference>
<dbReference type="VEuPathDB" id="VectorBase:FBgn0027607"/>
<dbReference type="eggNOG" id="KOG2225">
    <property type="taxonomic scope" value="Eukaryota"/>
</dbReference>
<dbReference type="GeneTree" id="ENSGT00390000008772"/>
<dbReference type="HOGENOM" id="CLU_013309_2_0_1"/>
<dbReference type="InParanoid" id="Q7KNA0"/>
<dbReference type="OMA" id="VWTLVCK"/>
<dbReference type="OrthoDB" id="10253409at2759"/>
<dbReference type="PhylomeDB" id="Q7KNA0"/>
<dbReference type="BioGRID-ORCS" id="35897">
    <property type="hits" value="0 hits in 1 CRISPR screen"/>
</dbReference>
<dbReference type="GenomeRNAi" id="35897"/>
<dbReference type="PRO" id="PR:Q7KNA0"/>
<dbReference type="Proteomes" id="UP000000803">
    <property type="component" value="Chromosome 2R"/>
</dbReference>
<dbReference type="Bgee" id="FBgn0027607">
    <property type="expression patterns" value="Expressed in spermathecum and 134 other cell types or tissues"/>
</dbReference>
<dbReference type="GO" id="GO:0005794">
    <property type="term" value="C:Golgi apparatus"/>
    <property type="evidence" value="ECO:0000318"/>
    <property type="project" value="GO_Central"/>
</dbReference>
<dbReference type="GO" id="GO:0007030">
    <property type="term" value="P:Golgi organization"/>
    <property type="evidence" value="ECO:0000318"/>
    <property type="project" value="GO_Central"/>
</dbReference>
<dbReference type="InterPro" id="IPR019142">
    <property type="entry name" value="Dymeclin"/>
</dbReference>
<dbReference type="PANTHER" id="PTHR12895">
    <property type="entry name" value="DYMECLIN"/>
    <property type="match status" value="1"/>
</dbReference>
<dbReference type="PANTHER" id="PTHR12895:SF9">
    <property type="entry name" value="DYMECLIN"/>
    <property type="match status" value="1"/>
</dbReference>
<dbReference type="Pfam" id="PF09742">
    <property type="entry name" value="Dymeclin"/>
    <property type="match status" value="1"/>
</dbReference>
<gene>
    <name type="ORF">CG8230</name>
</gene>
<protein>
    <recommendedName>
        <fullName>Dymeclin</fullName>
    </recommendedName>
</protein>
<accession>Q7KNA0</accession>
<organism>
    <name type="scientific">Drosophila melanogaster</name>
    <name type="common">Fruit fly</name>
    <dbReference type="NCBI Taxonomy" id="7227"/>
    <lineage>
        <taxon>Eukaryota</taxon>
        <taxon>Metazoa</taxon>
        <taxon>Ecdysozoa</taxon>
        <taxon>Arthropoda</taxon>
        <taxon>Hexapoda</taxon>
        <taxon>Insecta</taxon>
        <taxon>Pterygota</taxon>
        <taxon>Neoptera</taxon>
        <taxon>Endopterygota</taxon>
        <taxon>Diptera</taxon>
        <taxon>Brachycera</taxon>
        <taxon>Muscomorpha</taxon>
        <taxon>Ephydroidea</taxon>
        <taxon>Drosophilidae</taxon>
        <taxon>Drosophila</taxon>
        <taxon>Sophophora</taxon>
    </lineage>
</organism>
<keyword id="KW-0449">Lipoprotein</keyword>
<keyword id="KW-0519">Myristate</keyword>
<keyword id="KW-0597">Phosphoprotein</keyword>
<keyword id="KW-1185">Reference proteome</keyword>
<evidence type="ECO:0000250" key="1"/>
<evidence type="ECO:0000269" key="2">
    <source>
    </source>
</evidence>
<evidence type="ECO:0000269" key="3">
    <source>
    </source>
</evidence>
<evidence type="ECO:0000305" key="4"/>
<proteinExistence type="evidence at protein level"/>
<sequence length="699" mass="79125">MGINVSRTADLGSNQWLQRFVGRQHIAHDDEAFWNGLLNYNIVLPENSQDQLNLDSRLEALCQSFIGNNLKTGNFGSLVTVFLEKTSELLSLSDQESNMHVWQTFNALFIIRSLVKYINETGSEFQLLQHFEAMPNAELLQAALEQQQQTPAESATIAMEATEQSAAAAVPVIVDGSKFETFIDALVNLIVVIPVKEFTYHLHLEAVNMLITLLSVHLFAQQPTDKSIVFRTVFKCQHANVLMSALLHFVARIVEVPHTMFGSSSAGSFVFGIAESLLSIFTFRKQPDILKAGQAAGGGELSQRFRTHYPLANQSLLLILILTNHCTAQDNAYRTSLFSCADSKDSPKQGAVSFQIDFSAVYETLCTIVTIDQATLLLYLLLHRNERFYRFVMQQQDLEQLVIPILQTLYNAPDSNSHHIYMSLIVLLILSEDEGFNKNVHTIMLKNITWYTERTISEISLGGILILIVIRTIQYNMLKMRDKYLHTNCLAALANMSGHFRALHPYVAQRLVSLFETLARKHTRLDAQLKEPADSAVFVNVSTTPEDMLQDLSVLEEVLRMVLEILNSCLTNQLVYCPNLVYTLLYKRSVFEGFRSHHAFQDVIQNIDMVVGFFSSRLQRVQEQRGELGVNEVLEVISKGASQWSSDRLRKFPDLKFKYVEEDAPEEFFIPYVWTLVCKYGCVHFSSESIKSVTTDIAC</sequence>
<comment type="similarity">
    <text evidence="4">Belongs to the dymeclin family.</text>
</comment>
<feature type="initiator methionine" description="Removed" evidence="1">
    <location>
        <position position="1"/>
    </location>
</feature>
<feature type="chain" id="PRO_0000348215" description="Dymeclin">
    <location>
        <begin position="2"/>
        <end position="699"/>
    </location>
</feature>
<feature type="modified residue" description="Phosphoserine" evidence="2 3">
    <location>
        <position position="346"/>
    </location>
</feature>
<feature type="lipid moiety-binding region" description="N-myristoyl glycine" evidence="1">
    <location>
        <position position="2"/>
    </location>
</feature>